<sequence length="179" mass="21029">MEGEELIYHNIINEILVGYIKYYINDISEHELSPYQQQIKKILTYYDECLNKQVTITFSLTSAQEIKTQFTGVVTELFKDLINWGRICGFIVFSAKMAKYCKDANNHLESTVITTAYNFMKHNLLPWMISHGGQEEFLAFSLHSDIYSVIFNIKYFLSKFCNHMFFRSCVQLLRNCNLI</sequence>
<proteinExistence type="inferred from homology"/>
<gene>
    <name type="ordered locus">War-051</name>
</gene>
<dbReference type="EMBL" id="AY261366">
    <property type="status" value="NOT_ANNOTATED_CDS"/>
    <property type="molecule type" value="Genomic_DNA"/>
</dbReference>
<dbReference type="SMR" id="P0C8H6"/>
<dbReference type="Proteomes" id="UP000000858">
    <property type="component" value="Segment"/>
</dbReference>
<dbReference type="GO" id="GO:0044165">
    <property type="term" value="C:host cell endoplasmic reticulum"/>
    <property type="evidence" value="ECO:0007669"/>
    <property type="project" value="UniProtKB-SubCell"/>
</dbReference>
<dbReference type="GO" id="GO:0033650">
    <property type="term" value="C:host cell mitochondrion"/>
    <property type="evidence" value="ECO:0007669"/>
    <property type="project" value="UniProtKB-SubCell"/>
</dbReference>
<dbReference type="GO" id="GO:0051400">
    <property type="term" value="F:BH domain binding"/>
    <property type="evidence" value="ECO:0007669"/>
    <property type="project" value="TreeGrafter"/>
</dbReference>
<dbReference type="GO" id="GO:0042981">
    <property type="term" value="P:regulation of apoptotic process"/>
    <property type="evidence" value="ECO:0007669"/>
    <property type="project" value="InterPro"/>
</dbReference>
<dbReference type="GO" id="GO:0033668">
    <property type="term" value="P:symbiont-mediated suppression of host apoptosis"/>
    <property type="evidence" value="ECO:0007669"/>
    <property type="project" value="UniProtKB-KW"/>
</dbReference>
<dbReference type="Gene3D" id="1.10.437.10">
    <property type="entry name" value="Blc2-like"/>
    <property type="match status" value="1"/>
</dbReference>
<dbReference type="InterPro" id="IPR036834">
    <property type="entry name" value="Bcl-2-like_sf"/>
</dbReference>
<dbReference type="InterPro" id="IPR046371">
    <property type="entry name" value="Bcl-2_BH1-3"/>
</dbReference>
<dbReference type="InterPro" id="IPR026298">
    <property type="entry name" value="Bcl-2_fam"/>
</dbReference>
<dbReference type="InterPro" id="IPR002475">
    <property type="entry name" value="Bcl2-like"/>
</dbReference>
<dbReference type="InterPro" id="IPR020717">
    <property type="entry name" value="Bcl2_BH1_motif_CS"/>
</dbReference>
<dbReference type="InterPro" id="IPR020726">
    <property type="entry name" value="Bcl2_BH2_motif_CS"/>
</dbReference>
<dbReference type="PANTHER" id="PTHR11256:SF62">
    <property type="entry name" value="BCL-2 BCL-2 HOMOLOGY REGION 1-3 DOMAIN-CONTAINING PROTEIN"/>
    <property type="match status" value="1"/>
</dbReference>
<dbReference type="PANTHER" id="PTHR11256">
    <property type="entry name" value="BCL-2 RELATED"/>
    <property type="match status" value="1"/>
</dbReference>
<dbReference type="Pfam" id="PF00452">
    <property type="entry name" value="Bcl-2"/>
    <property type="match status" value="1"/>
</dbReference>
<dbReference type="PRINTS" id="PR01862">
    <property type="entry name" value="BCL2FAMILY"/>
</dbReference>
<dbReference type="SMART" id="SM00337">
    <property type="entry name" value="BCL"/>
    <property type="match status" value="1"/>
</dbReference>
<dbReference type="SUPFAM" id="SSF56854">
    <property type="entry name" value="Bcl-2 inhibitors of programmed cell death"/>
    <property type="match status" value="1"/>
</dbReference>
<dbReference type="PROSITE" id="PS50062">
    <property type="entry name" value="BCL2_FAMILY"/>
    <property type="match status" value="1"/>
</dbReference>
<dbReference type="PROSITE" id="PS01080">
    <property type="entry name" value="BH1"/>
    <property type="match status" value="1"/>
</dbReference>
<dbReference type="PROSITE" id="PS01258">
    <property type="entry name" value="BH2"/>
    <property type="match status" value="1"/>
</dbReference>
<comment type="function">
    <text evidence="1">Suppresses apoptosis in host cell to promote the viral replication (By similarity). Has the ability to potentially bind to all the members of the proapoptotic Bcl-2 family (By similarity). Inhibits autophagy by interacting with host Beclin 1 (BECN1) (By similarity).</text>
</comment>
<comment type="subunit">
    <text evidence="1">Interacts with host BECN1 (via BH3 homology domain); this interaction allows the virus to inhibit BECN1, and thus autophagy (By similarity). Interacts with host BID (By similarity). Interacts with host BAX (By similarity).</text>
</comment>
<comment type="subcellular location">
    <subcellularLocation>
        <location evidence="1">Host mitochondrion</location>
    </subcellularLocation>
    <subcellularLocation>
        <location evidence="1">Host endoplasmic reticulum</location>
    </subcellularLocation>
</comment>
<comment type="induction">
    <text evidence="2">Expressed in the early phase of the viral replicative cycle (By similarity). Expressed in the late phase of the viral replicative cycle (By similarity).</text>
</comment>
<comment type="similarity">
    <text evidence="4">Belongs to the Bcl-2 family.</text>
</comment>
<name>ARBH_ASFWA</name>
<reference key="1">
    <citation type="submission" date="2003-03" db="EMBL/GenBank/DDBJ databases">
        <title>African swine fever virus genomes.</title>
        <authorList>
            <person name="Kutish G.F."/>
            <person name="Rock D.L."/>
        </authorList>
    </citation>
    <scope>NUCLEOTIDE SEQUENCE [LARGE SCALE GENOMIC DNA]</scope>
</reference>
<accession>P0C8H6</accession>
<evidence type="ECO:0000250" key="1">
    <source>
        <dbReference type="UniProtKB" id="P42485"/>
    </source>
</evidence>
<evidence type="ECO:0000250" key="2">
    <source>
        <dbReference type="UniProtKB" id="Q07819"/>
    </source>
</evidence>
<evidence type="ECO:0000255" key="3"/>
<evidence type="ECO:0000305" key="4"/>
<feature type="chain" id="PRO_0000355218" description="Apoptosis regulator Bcl-2 homolog">
    <location>
        <begin position="1"/>
        <end position="179"/>
    </location>
</feature>
<feature type="short sequence motif" description="BH1" evidence="3">
    <location>
        <begin position="76"/>
        <end position="95"/>
    </location>
</feature>
<feature type="short sequence motif" description="BH2" evidence="3">
    <location>
        <begin position="126"/>
        <end position="141"/>
    </location>
</feature>
<organism>
    <name type="scientific">African swine fever virus (isolate Warthog/Namibia/Wart80/1980)</name>
    <name type="common">ASFV</name>
    <dbReference type="NCBI Taxonomy" id="561444"/>
    <lineage>
        <taxon>Viruses</taxon>
        <taxon>Varidnaviria</taxon>
        <taxon>Bamfordvirae</taxon>
        <taxon>Nucleocytoviricota</taxon>
        <taxon>Pokkesviricetes</taxon>
        <taxon>Asfuvirales</taxon>
        <taxon>Asfarviridae</taxon>
        <taxon>Asfivirus</taxon>
        <taxon>African swine fever virus</taxon>
    </lineage>
</organism>
<protein>
    <recommendedName>
        <fullName>Apoptosis regulator Bcl-2 homolog</fullName>
    </recommendedName>
</protein>
<organismHost>
    <name type="scientific">Ornithodoros</name>
    <name type="common">relapsing fever ticks</name>
    <dbReference type="NCBI Taxonomy" id="6937"/>
</organismHost>
<organismHost>
    <name type="scientific">Phacochoerus aethiopicus</name>
    <name type="common">Warthog</name>
    <dbReference type="NCBI Taxonomy" id="85517"/>
</organismHost>
<organismHost>
    <name type="scientific">Phacochoerus africanus</name>
    <name type="common">Warthog</name>
    <dbReference type="NCBI Taxonomy" id="41426"/>
</organismHost>
<organismHost>
    <name type="scientific">Potamochoerus larvatus</name>
    <name type="common">Bushpig</name>
    <dbReference type="NCBI Taxonomy" id="273792"/>
</organismHost>
<organismHost>
    <name type="scientific">Sus scrofa</name>
    <name type="common">Pig</name>
    <dbReference type="NCBI Taxonomy" id="9823"/>
</organismHost>
<keyword id="KW-0244">Early protein</keyword>
<keyword id="KW-1038">Host endoplasmic reticulum</keyword>
<keyword id="KW-1045">Host mitochondrion</keyword>
<keyword id="KW-0945">Host-virus interaction</keyword>
<keyword id="KW-1081">Inhibition of host apoptosis by viral BCL2-like protein</keyword>
<keyword id="KW-0426">Late protein</keyword>
<keyword id="KW-1119">Modulation of host cell apoptosis by virus</keyword>